<organism>
    <name type="scientific">Mastigocladus laminosus</name>
    <name type="common">Fischerella sp.</name>
    <dbReference type="NCBI Taxonomy" id="83541"/>
    <lineage>
        <taxon>Bacteria</taxon>
        <taxon>Bacillati</taxon>
        <taxon>Cyanobacteriota</taxon>
        <taxon>Cyanophyceae</taxon>
        <taxon>Nostocales</taxon>
        <taxon>Hapalosiphonaceae</taxon>
        <taxon>Mastigocladus</taxon>
    </lineage>
</organism>
<gene>
    <name evidence="1" type="primary">petD</name>
</gene>
<accession>P83792</accession>
<accession>Q5YJJ5</accession>
<protein>
    <recommendedName>
        <fullName evidence="1">Cytochrome b6-f complex subunit 4</fullName>
    </recommendedName>
    <alternativeName>
        <fullName evidence="1">17 kDa polypeptide</fullName>
    </alternativeName>
    <alternativeName>
        <fullName evidence="3">Cytochrome b6-f complex subunit IV</fullName>
    </alternativeName>
</protein>
<dbReference type="EMBL" id="AY390357">
    <property type="protein sequence ID" value="AAR26243.1"/>
    <property type="molecule type" value="Genomic_DNA"/>
</dbReference>
<dbReference type="PDB" id="1VF5">
    <property type="method" value="X-ray"/>
    <property type="resolution" value="3.00 A"/>
    <property type="chains" value="B/O=1-160"/>
</dbReference>
<dbReference type="PDB" id="2D2C">
    <property type="method" value="X-ray"/>
    <property type="resolution" value="3.80 A"/>
    <property type="chains" value="B/O=1-160"/>
</dbReference>
<dbReference type="PDB" id="2E74">
    <property type="method" value="X-ray"/>
    <property type="resolution" value="3.00 A"/>
    <property type="chains" value="B=1-160"/>
</dbReference>
<dbReference type="PDB" id="2E75">
    <property type="method" value="X-ray"/>
    <property type="resolution" value="3.55 A"/>
    <property type="chains" value="B=1-160"/>
</dbReference>
<dbReference type="PDB" id="2E76">
    <property type="method" value="X-ray"/>
    <property type="resolution" value="3.41 A"/>
    <property type="chains" value="B=1-160"/>
</dbReference>
<dbReference type="PDB" id="4H0L">
    <property type="method" value="X-ray"/>
    <property type="resolution" value="3.25 A"/>
    <property type="chains" value="B=1-160"/>
</dbReference>
<dbReference type="PDB" id="4H13">
    <property type="method" value="X-ray"/>
    <property type="resolution" value="3.07 A"/>
    <property type="chains" value="B=1-160"/>
</dbReference>
<dbReference type="PDB" id="4I7Z">
    <property type="method" value="X-ray"/>
    <property type="resolution" value="2.80 A"/>
    <property type="chains" value="B=1-160"/>
</dbReference>
<dbReference type="PDB" id="4PV1">
    <property type="method" value="X-ray"/>
    <property type="resolution" value="3.00 A"/>
    <property type="chains" value="B=1-160"/>
</dbReference>
<dbReference type="PDBsum" id="1VF5"/>
<dbReference type="PDBsum" id="2D2C"/>
<dbReference type="PDBsum" id="2E74"/>
<dbReference type="PDBsum" id="2E75"/>
<dbReference type="PDBsum" id="2E76"/>
<dbReference type="PDBsum" id="4H0L"/>
<dbReference type="PDBsum" id="4H13"/>
<dbReference type="PDBsum" id="4I7Z"/>
<dbReference type="PDBsum" id="4PV1"/>
<dbReference type="SMR" id="P83792"/>
<dbReference type="DrugBank" id="DB08453">
    <property type="generic name" value="2-Nonyl-4-quinolinol 1-oxide"/>
</dbReference>
<dbReference type="DrugBank" id="DB04646">
    <property type="generic name" value="Dibromothymoquinone"/>
</dbReference>
<dbReference type="EvolutionaryTrace" id="P83792"/>
<dbReference type="GO" id="GO:0031676">
    <property type="term" value="C:plasma membrane-derived thylakoid membrane"/>
    <property type="evidence" value="ECO:0007669"/>
    <property type="project" value="UniProtKB-SubCell"/>
</dbReference>
<dbReference type="GO" id="GO:0045158">
    <property type="term" value="F:electron transporter, transferring electrons within cytochrome b6/f complex of photosystem II activity"/>
    <property type="evidence" value="ECO:0007669"/>
    <property type="project" value="UniProtKB-UniRule"/>
</dbReference>
<dbReference type="GO" id="GO:0045156">
    <property type="term" value="F:electron transporter, transferring electrons within the cyclic electron transport pathway of photosynthesis activity"/>
    <property type="evidence" value="ECO:0007669"/>
    <property type="project" value="InterPro"/>
</dbReference>
<dbReference type="GO" id="GO:0008121">
    <property type="term" value="F:ubiquinol-cytochrome-c reductase activity"/>
    <property type="evidence" value="ECO:0007669"/>
    <property type="project" value="TreeGrafter"/>
</dbReference>
<dbReference type="GO" id="GO:0009767">
    <property type="term" value="P:photosynthetic electron transport chain"/>
    <property type="evidence" value="ECO:0007669"/>
    <property type="project" value="InterPro"/>
</dbReference>
<dbReference type="CDD" id="cd00290">
    <property type="entry name" value="cytochrome_b_C"/>
    <property type="match status" value="1"/>
</dbReference>
<dbReference type="FunFam" id="1.10.287.980:FF:000001">
    <property type="entry name" value="Cytochrome b6-f complex subunit 4"/>
    <property type="match status" value="1"/>
</dbReference>
<dbReference type="FunFam" id="1.20.5.510:FF:000002">
    <property type="entry name" value="Cytochrome b6-f complex subunit 4"/>
    <property type="match status" value="1"/>
</dbReference>
<dbReference type="Gene3D" id="1.10.287.980">
    <property type="entry name" value="plastocyanin oxidoreductase"/>
    <property type="match status" value="1"/>
</dbReference>
<dbReference type="Gene3D" id="1.20.5.510">
    <property type="entry name" value="Single helix bin"/>
    <property type="match status" value="1"/>
</dbReference>
<dbReference type="HAMAP" id="MF_01344">
    <property type="entry name" value="Cytb6_f_subIV"/>
    <property type="match status" value="1"/>
</dbReference>
<dbReference type="InterPro" id="IPR005798">
    <property type="entry name" value="Cyt_b/b6_C"/>
</dbReference>
<dbReference type="InterPro" id="IPR036150">
    <property type="entry name" value="Cyt_b/b6_C_sf"/>
</dbReference>
<dbReference type="InterPro" id="IPR005870">
    <property type="entry name" value="Cyt_b6/f_cplx_suIV"/>
</dbReference>
<dbReference type="InterPro" id="IPR048260">
    <property type="entry name" value="Cytochrome_b_C_euk/bac"/>
</dbReference>
<dbReference type="NCBIfam" id="TIGR01156">
    <property type="entry name" value="cytb6_f_IV"/>
    <property type="match status" value="1"/>
</dbReference>
<dbReference type="PANTHER" id="PTHR19271">
    <property type="entry name" value="CYTOCHROME B"/>
    <property type="match status" value="1"/>
</dbReference>
<dbReference type="PANTHER" id="PTHR19271:SF41">
    <property type="entry name" value="CYTOCHROME B_B6 C-TERMINAL REGION PROFILE DOMAIN-CONTAINING PROTEIN"/>
    <property type="match status" value="1"/>
</dbReference>
<dbReference type="Pfam" id="PF00032">
    <property type="entry name" value="Cytochrom_B_C"/>
    <property type="match status" value="1"/>
</dbReference>
<dbReference type="PIRSF" id="PIRSF000033">
    <property type="entry name" value="B6f_17K"/>
    <property type="match status" value="1"/>
</dbReference>
<dbReference type="SUPFAM" id="SSF81648">
    <property type="entry name" value="a domain/subunit of cytochrome bc1 complex (Ubiquinol-cytochrome c reductase)"/>
    <property type="match status" value="1"/>
</dbReference>
<dbReference type="PROSITE" id="PS51003">
    <property type="entry name" value="CYTB_CTER"/>
    <property type="match status" value="1"/>
</dbReference>
<keyword id="KW-0002">3D-structure</keyword>
<keyword id="KW-0249">Electron transport</keyword>
<keyword id="KW-0472">Membrane</keyword>
<keyword id="KW-0602">Photosynthesis</keyword>
<keyword id="KW-0793">Thylakoid</keyword>
<keyword id="KW-0812">Transmembrane</keyword>
<keyword id="KW-1133">Transmembrane helix</keyword>
<keyword id="KW-0813">Transport</keyword>
<name>PETD_MASLA</name>
<proteinExistence type="evidence at protein level"/>
<comment type="function">
    <text evidence="4">Component of the cytochrome b6-f complex, which mediates electron transfer between photosystem II (PSII) and photosystem I (PSI), cyclic electron flow around PSI, and state transitions.</text>
</comment>
<comment type="subunit">
    <text evidence="2">The 4 large subunits of the cytochrome b6-f complex are cytochrome b6, subunit IV (17 kDa polypeptide, PetD), cytochrome f and the Rieske protein, while the 4 small subunits are PetG, PetL, PetM and PetN. The complex functions as a dimer.</text>
</comment>
<comment type="subcellular location">
    <subcellularLocation>
        <location evidence="4">Cellular thylakoid membrane</location>
        <topology evidence="2">Multi-pass membrane protein</topology>
    </subcellularLocation>
</comment>
<comment type="similarity">
    <text evidence="1">Belongs to the cytochrome b family. PetD subfamily.</text>
</comment>
<evidence type="ECO:0000255" key="1">
    <source>
        <dbReference type="HAMAP-Rule" id="MF_01344"/>
    </source>
</evidence>
<evidence type="ECO:0000269" key="2">
    <source>
    </source>
</evidence>
<evidence type="ECO:0000303" key="3">
    <source>
    </source>
</evidence>
<evidence type="ECO:0000305" key="4">
    <source>
    </source>
</evidence>
<evidence type="ECO:0007829" key="5">
    <source>
        <dbReference type="PDB" id="1VF5"/>
    </source>
</evidence>
<evidence type="ECO:0007829" key="6">
    <source>
        <dbReference type="PDB" id="4I7Z"/>
    </source>
</evidence>
<reference key="1">
    <citation type="submission" date="2003-09" db="EMBL/GenBank/DDBJ databases">
        <title>Cloning and characterization of the petBD and petCA operon from the thermophilic cyanobacterium Mastigocladus laminosus.</title>
        <authorList>
            <person name="Yan J."/>
            <person name="Zhang H."/>
            <person name="Cramer W.A."/>
        </authorList>
    </citation>
    <scope>NUCLEOTIDE SEQUENCE [GENOMIC DNA]</scope>
</reference>
<reference key="2">
    <citation type="journal article" date="2003" name="Science">
        <title>Structure of the cytochrome b6f complex of oxygenic photosynthesis: tuning the cavity.</title>
        <authorList>
            <person name="Kurisu G."/>
            <person name="Zhang H."/>
            <person name="Smith J.L."/>
            <person name="Cramer W.A."/>
        </authorList>
    </citation>
    <scope>X-RAY CRYSTALLOGRAPHY (3.0 ANGSTROMS) IN CYTOCHROME B6-F COMPLEX</scope>
    <scope>FUNCTION</scope>
    <scope>SUBUNIT</scope>
    <scope>SUBCELLULAR LOCATION</scope>
    <scope>TOPOLOGY</scope>
</reference>
<feature type="chain" id="PRO_0000061901" description="Cytochrome b6-f complex subunit 4">
    <location>
        <begin position="1"/>
        <end position="160"/>
    </location>
</feature>
<feature type="topological domain" description="Cytoplasmic" evidence="4">
    <location>
        <begin position="1"/>
        <end position="35"/>
    </location>
</feature>
<feature type="transmembrane region" description="Helical" evidence="1 4">
    <location>
        <begin position="36"/>
        <end position="56"/>
    </location>
</feature>
<feature type="topological domain" description="Lumenal, thylakoid" evidence="4">
    <location>
        <begin position="57"/>
        <end position="94"/>
    </location>
</feature>
<feature type="transmembrane region" description="Helical" evidence="1 4">
    <location>
        <begin position="95"/>
        <end position="115"/>
    </location>
</feature>
<feature type="topological domain" description="Cytoplasmic" evidence="4">
    <location>
        <begin position="116"/>
        <end position="130"/>
    </location>
</feature>
<feature type="transmembrane region" description="Helical" evidence="1 4">
    <location>
        <begin position="131"/>
        <end position="151"/>
    </location>
</feature>
<feature type="topological domain" description="Lumenal, thylakoid" evidence="4">
    <location>
        <begin position="152"/>
        <end position="160"/>
    </location>
</feature>
<feature type="helix" evidence="6">
    <location>
        <begin position="12"/>
        <end position="19"/>
    </location>
</feature>
<feature type="strand" evidence="6">
    <location>
        <begin position="26"/>
        <end position="30"/>
    </location>
</feature>
<feature type="helix" evidence="6">
    <location>
        <begin position="31"/>
        <end position="35"/>
    </location>
</feature>
<feature type="turn" evidence="6">
    <location>
        <begin position="36"/>
        <end position="39"/>
    </location>
</feature>
<feature type="helix" evidence="6">
    <location>
        <begin position="40"/>
        <end position="57"/>
    </location>
</feature>
<feature type="helix" evidence="6">
    <location>
        <begin position="79"/>
        <end position="81"/>
    </location>
</feature>
<feature type="helix" evidence="6">
    <location>
        <begin position="82"/>
        <end position="90"/>
    </location>
</feature>
<feature type="helix" evidence="6">
    <location>
        <begin position="94"/>
        <end position="114"/>
    </location>
</feature>
<feature type="helix" evidence="6">
    <location>
        <begin position="115"/>
        <end position="117"/>
    </location>
</feature>
<feature type="strand" evidence="5">
    <location>
        <begin position="119"/>
        <end position="121"/>
    </location>
</feature>
<feature type="helix" evidence="6">
    <location>
        <begin position="123"/>
        <end position="125"/>
    </location>
</feature>
<feature type="helix" evidence="6">
    <location>
        <begin position="127"/>
        <end position="148"/>
    </location>
</feature>
<feature type="helix" evidence="6">
    <location>
        <begin position="151"/>
        <end position="153"/>
    </location>
</feature>
<feature type="strand" evidence="6">
    <location>
        <begin position="154"/>
        <end position="156"/>
    </location>
</feature>
<feature type="turn" evidence="6">
    <location>
        <begin position="157"/>
        <end position="159"/>
    </location>
</feature>
<sequence>MATLKKPDLSDPKLRAKLAKGMGHNYYGEPAWPNDLLYVFPVVIMGTFACIVALSVLDPAMVGEPADPFATPLEILPEWYLYPVFQILRSVPNKLLGVLLMASVPLGLILVPFIENVNKFQNPFRRPVATTIFLFGTLVTIWLGIGATFPLDKTLTLGLF</sequence>